<proteinExistence type="inferred from homology"/>
<keyword id="KW-0997">Cell inner membrane</keyword>
<keyword id="KW-1003">Cell membrane</keyword>
<keyword id="KW-0472">Membrane</keyword>
<keyword id="KW-0812">Transmembrane</keyword>
<keyword id="KW-1133">Transmembrane helix</keyword>
<gene>
    <name evidence="1" type="primary">yciB</name>
    <name type="ordered locus">BMA10229_A3372</name>
</gene>
<protein>
    <recommendedName>
        <fullName evidence="1">Inner membrane-spanning protein YciB</fullName>
    </recommendedName>
</protein>
<organism>
    <name type="scientific">Burkholderia mallei (strain NCTC 10229)</name>
    <dbReference type="NCBI Taxonomy" id="412022"/>
    <lineage>
        <taxon>Bacteria</taxon>
        <taxon>Pseudomonadati</taxon>
        <taxon>Pseudomonadota</taxon>
        <taxon>Betaproteobacteria</taxon>
        <taxon>Burkholderiales</taxon>
        <taxon>Burkholderiaceae</taxon>
        <taxon>Burkholderia</taxon>
        <taxon>pseudomallei group</taxon>
    </lineage>
</organism>
<accession>A2SBI5</accession>
<dbReference type="EMBL" id="CP000546">
    <property type="protein sequence ID" value="ABN03644.1"/>
    <property type="molecule type" value="Genomic_DNA"/>
</dbReference>
<dbReference type="RefSeq" id="WP_004192037.1">
    <property type="nucleotide sequence ID" value="NC_008836.1"/>
</dbReference>
<dbReference type="KEGG" id="bml:BMA10229_A3372"/>
<dbReference type="HOGENOM" id="CLU_089554_2_0_4"/>
<dbReference type="Proteomes" id="UP000002283">
    <property type="component" value="Chromosome I"/>
</dbReference>
<dbReference type="GO" id="GO:0005886">
    <property type="term" value="C:plasma membrane"/>
    <property type="evidence" value="ECO:0007669"/>
    <property type="project" value="UniProtKB-SubCell"/>
</dbReference>
<dbReference type="HAMAP" id="MF_00189">
    <property type="entry name" value="YciB"/>
    <property type="match status" value="1"/>
</dbReference>
<dbReference type="InterPro" id="IPR006008">
    <property type="entry name" value="YciB"/>
</dbReference>
<dbReference type="NCBIfam" id="TIGR00997">
    <property type="entry name" value="ispZ"/>
    <property type="match status" value="1"/>
</dbReference>
<dbReference type="NCBIfam" id="NF001325">
    <property type="entry name" value="PRK00259.1-3"/>
    <property type="match status" value="1"/>
</dbReference>
<dbReference type="PANTHER" id="PTHR36917:SF1">
    <property type="entry name" value="INNER MEMBRANE-SPANNING PROTEIN YCIB"/>
    <property type="match status" value="1"/>
</dbReference>
<dbReference type="PANTHER" id="PTHR36917">
    <property type="entry name" value="INTRACELLULAR SEPTATION PROTEIN A-RELATED"/>
    <property type="match status" value="1"/>
</dbReference>
<dbReference type="Pfam" id="PF04279">
    <property type="entry name" value="IspA"/>
    <property type="match status" value="1"/>
</dbReference>
<comment type="function">
    <text evidence="1">Plays a role in cell envelope biogenesis, maintenance of cell envelope integrity and membrane homeostasis.</text>
</comment>
<comment type="subcellular location">
    <subcellularLocation>
        <location evidence="1">Cell inner membrane</location>
        <topology evidence="1">Multi-pass membrane protein</topology>
    </subcellularLocation>
</comment>
<comment type="similarity">
    <text evidence="1">Belongs to the YciB family.</text>
</comment>
<reference key="1">
    <citation type="journal article" date="2010" name="Genome Biol. Evol.">
        <title>Continuing evolution of Burkholderia mallei through genome reduction and large-scale rearrangements.</title>
        <authorList>
            <person name="Losada L."/>
            <person name="Ronning C.M."/>
            <person name="DeShazer D."/>
            <person name="Woods D."/>
            <person name="Fedorova N."/>
            <person name="Kim H.S."/>
            <person name="Shabalina S.A."/>
            <person name="Pearson T.R."/>
            <person name="Brinkac L."/>
            <person name="Tan P."/>
            <person name="Nandi T."/>
            <person name="Crabtree J."/>
            <person name="Badger J."/>
            <person name="Beckstrom-Sternberg S."/>
            <person name="Saqib M."/>
            <person name="Schutzer S.E."/>
            <person name="Keim P."/>
            <person name="Nierman W.C."/>
        </authorList>
    </citation>
    <scope>NUCLEOTIDE SEQUENCE [LARGE SCALE GENOMIC DNA]</scope>
    <source>
        <strain>NCTC 10229</strain>
    </source>
</reference>
<name>YCIB_BURM9</name>
<evidence type="ECO:0000255" key="1">
    <source>
        <dbReference type="HAMAP-Rule" id="MF_00189"/>
    </source>
</evidence>
<sequence>MKFLFDLFPIILFFAAFKLWGIFTATAVAIAATLAQVAWVAFRHRKVDTMLWVSLGVIVVFGGATLVLHDEKFIQWKPTVLYWLFAVGLVAARYAFGKNLIEKMMGKQLTLPEPVWDKLNLAWAAFFAALGVTNLYVVRNFTESQWVNFKLFGTTGAIVVFVILQSLWLAKYLKEE</sequence>
<feature type="chain" id="PRO_1000020993" description="Inner membrane-spanning protein YciB">
    <location>
        <begin position="1"/>
        <end position="176"/>
    </location>
</feature>
<feature type="transmembrane region" description="Helical" evidence="1">
    <location>
        <begin position="3"/>
        <end position="23"/>
    </location>
</feature>
<feature type="transmembrane region" description="Helical" evidence="1">
    <location>
        <begin position="49"/>
        <end position="69"/>
    </location>
</feature>
<feature type="transmembrane region" description="Helical" evidence="1">
    <location>
        <begin position="72"/>
        <end position="92"/>
    </location>
</feature>
<feature type="transmembrane region" description="Helical" evidence="1">
    <location>
        <begin position="118"/>
        <end position="138"/>
    </location>
</feature>
<feature type="transmembrane region" description="Helical" evidence="1">
    <location>
        <begin position="149"/>
        <end position="169"/>
    </location>
</feature>